<geneLocation type="chloroplast"/>
<accession>O78498</accession>
<evidence type="ECO:0000250" key="1"/>
<evidence type="ECO:0000255" key="2"/>
<evidence type="ECO:0000305" key="3"/>
<name>PETN_GUITH</name>
<organism>
    <name type="scientific">Guillardia theta</name>
    <name type="common">Cryptophyte</name>
    <name type="synonym">Cryptomonas phi</name>
    <dbReference type="NCBI Taxonomy" id="55529"/>
    <lineage>
        <taxon>Eukaryota</taxon>
        <taxon>Cryptophyceae</taxon>
        <taxon>Pyrenomonadales</taxon>
        <taxon>Geminigeraceae</taxon>
        <taxon>Guillardia</taxon>
    </lineage>
</organism>
<proteinExistence type="inferred from homology"/>
<feature type="chain" id="PRO_0000217109" description="Cytochrome b6-f complex subunit 8">
    <location>
        <begin position="1"/>
        <end position="29"/>
    </location>
</feature>
<feature type="transmembrane region" description="Helical" evidence="2">
    <location>
        <begin position="3"/>
        <end position="23"/>
    </location>
</feature>
<comment type="function">
    <text evidence="1">Component of the cytochrome b6-f complex, which mediates electron transfer between photosystem II (PSII) and photosystem I (PSI), cyclic electron flow around PSI, and state transitions.</text>
</comment>
<comment type="subunit">
    <text evidence="1">The 4 large subunits of the cytochrome b6-f complex are cytochrome b6, subunit IV (17 kDa polypeptide, PetD), cytochrome f and the Rieske protein, while the 4 small subunits are PetG, PetL, PetM and PetN. The complex functions as a dimer (By similarity).</text>
</comment>
<comment type="subcellular location">
    <subcellularLocation>
        <location evidence="1">Plastid</location>
        <location evidence="1">Chloroplast thylakoid membrane</location>
        <topology evidence="1">Single-pass membrane protein</topology>
    </subcellularLocation>
</comment>
<comment type="similarity">
    <text evidence="3">Belongs to the PetN family.</text>
</comment>
<gene>
    <name type="primary">petN</name>
    <name type="synonym">ycf6</name>
</gene>
<keyword id="KW-0150">Chloroplast</keyword>
<keyword id="KW-0249">Electron transport</keyword>
<keyword id="KW-0472">Membrane</keyword>
<keyword id="KW-0602">Photosynthesis</keyword>
<keyword id="KW-0934">Plastid</keyword>
<keyword id="KW-0793">Thylakoid</keyword>
<keyword id="KW-0812">Transmembrane</keyword>
<keyword id="KW-1133">Transmembrane helix</keyword>
<keyword id="KW-0813">Transport</keyword>
<sequence length="29" mass="3231">MDILSLGWSALMVVFTFSLALVVWGRNGF</sequence>
<reference key="1">
    <citation type="journal article" date="1999" name="J. Mol. Evol.">
        <title>The plastid genome of the cryptophyte alga, Guillardia theta: complete sequence and conserved synteny groups confirm its common ancestry with red algae.</title>
        <authorList>
            <person name="Douglas S.E."/>
            <person name="Penny S.L."/>
        </authorList>
    </citation>
    <scope>NUCLEOTIDE SEQUENCE [LARGE SCALE GENOMIC DNA]</scope>
</reference>
<dbReference type="EMBL" id="AF041468">
    <property type="protein sequence ID" value="AAC35689.1"/>
    <property type="molecule type" value="Genomic_DNA"/>
</dbReference>
<dbReference type="RefSeq" id="NP_050755.1">
    <property type="nucleotide sequence ID" value="NC_000926.1"/>
</dbReference>
<dbReference type="SMR" id="O78498"/>
<dbReference type="GeneID" id="857060"/>
<dbReference type="HOGENOM" id="CLU_215774_2_0_1"/>
<dbReference type="GO" id="GO:0009535">
    <property type="term" value="C:chloroplast thylakoid membrane"/>
    <property type="evidence" value="ECO:0007669"/>
    <property type="project" value="UniProtKB-SubCell"/>
</dbReference>
<dbReference type="GO" id="GO:0009512">
    <property type="term" value="C:cytochrome b6f complex"/>
    <property type="evidence" value="ECO:0007669"/>
    <property type="project" value="InterPro"/>
</dbReference>
<dbReference type="GO" id="GO:0045158">
    <property type="term" value="F:electron transporter, transferring electrons within cytochrome b6/f complex of photosystem II activity"/>
    <property type="evidence" value="ECO:0007669"/>
    <property type="project" value="InterPro"/>
</dbReference>
<dbReference type="GO" id="GO:0017004">
    <property type="term" value="P:cytochrome complex assembly"/>
    <property type="evidence" value="ECO:0007669"/>
    <property type="project" value="UniProtKB-UniRule"/>
</dbReference>
<dbReference type="GO" id="GO:0015979">
    <property type="term" value="P:photosynthesis"/>
    <property type="evidence" value="ECO:0007669"/>
    <property type="project" value="UniProtKB-KW"/>
</dbReference>
<dbReference type="HAMAP" id="MF_00395">
    <property type="entry name" value="Cytb6_f_PetN"/>
    <property type="match status" value="1"/>
</dbReference>
<dbReference type="InterPro" id="IPR036143">
    <property type="entry name" value="Cytochr_b6-f_cplx_su8_sf"/>
</dbReference>
<dbReference type="InterPro" id="IPR005497">
    <property type="entry name" value="Cytochrome_b6-f_cplx_su8"/>
</dbReference>
<dbReference type="NCBIfam" id="NF011331">
    <property type="entry name" value="PRK14747.1"/>
    <property type="match status" value="1"/>
</dbReference>
<dbReference type="Pfam" id="PF03742">
    <property type="entry name" value="PetN"/>
    <property type="match status" value="1"/>
</dbReference>
<dbReference type="SUPFAM" id="SSF103451">
    <property type="entry name" value="PetN subunit of the cytochrome b6f complex"/>
    <property type="match status" value="1"/>
</dbReference>
<protein>
    <recommendedName>
        <fullName>Cytochrome b6-f complex subunit 8</fullName>
    </recommendedName>
    <alternativeName>
        <fullName>Cytochrome b6-f complex subunit PetN</fullName>
    </alternativeName>
    <alternativeName>
        <fullName>Cytochrome b6-f complex subunit VIII</fullName>
    </alternativeName>
</protein>